<keyword id="KW-0067">ATP-binding</keyword>
<keyword id="KW-0319">Glycerol metabolism</keyword>
<keyword id="KW-0418">Kinase</keyword>
<keyword id="KW-0547">Nucleotide-binding</keyword>
<keyword id="KW-1185">Reference proteome</keyword>
<keyword id="KW-0808">Transferase</keyword>
<feature type="chain" id="PRO_1000020726" description="Glycerol kinase">
    <location>
        <begin position="1"/>
        <end position="497"/>
    </location>
</feature>
<feature type="binding site" evidence="1">
    <location>
        <position position="12"/>
    </location>
    <ligand>
        <name>ADP</name>
        <dbReference type="ChEBI" id="CHEBI:456216"/>
    </ligand>
</feature>
<feature type="binding site" evidence="1">
    <location>
        <position position="12"/>
    </location>
    <ligand>
        <name>ATP</name>
        <dbReference type="ChEBI" id="CHEBI:30616"/>
    </ligand>
</feature>
<feature type="binding site" evidence="1">
    <location>
        <position position="12"/>
    </location>
    <ligand>
        <name>sn-glycerol 3-phosphate</name>
        <dbReference type="ChEBI" id="CHEBI:57597"/>
    </ligand>
</feature>
<feature type="binding site" evidence="1">
    <location>
        <position position="13"/>
    </location>
    <ligand>
        <name>ATP</name>
        <dbReference type="ChEBI" id="CHEBI:30616"/>
    </ligand>
</feature>
<feature type="binding site" evidence="1">
    <location>
        <position position="14"/>
    </location>
    <ligand>
        <name>ATP</name>
        <dbReference type="ChEBI" id="CHEBI:30616"/>
    </ligand>
</feature>
<feature type="binding site" evidence="1">
    <location>
        <position position="16"/>
    </location>
    <ligand>
        <name>ADP</name>
        <dbReference type="ChEBI" id="CHEBI:456216"/>
    </ligand>
</feature>
<feature type="binding site" evidence="1">
    <location>
        <position position="82"/>
    </location>
    <ligand>
        <name>glycerol</name>
        <dbReference type="ChEBI" id="CHEBI:17754"/>
    </ligand>
</feature>
<feature type="binding site" evidence="1">
    <location>
        <position position="82"/>
    </location>
    <ligand>
        <name>sn-glycerol 3-phosphate</name>
        <dbReference type="ChEBI" id="CHEBI:57597"/>
    </ligand>
</feature>
<feature type="binding site" evidence="1">
    <location>
        <position position="83"/>
    </location>
    <ligand>
        <name>glycerol</name>
        <dbReference type="ChEBI" id="CHEBI:17754"/>
    </ligand>
</feature>
<feature type="binding site" evidence="1">
    <location>
        <position position="83"/>
    </location>
    <ligand>
        <name>sn-glycerol 3-phosphate</name>
        <dbReference type="ChEBI" id="CHEBI:57597"/>
    </ligand>
</feature>
<feature type="binding site" evidence="1">
    <location>
        <position position="134"/>
    </location>
    <ligand>
        <name>glycerol</name>
        <dbReference type="ChEBI" id="CHEBI:17754"/>
    </ligand>
</feature>
<feature type="binding site" evidence="1">
    <location>
        <position position="134"/>
    </location>
    <ligand>
        <name>sn-glycerol 3-phosphate</name>
        <dbReference type="ChEBI" id="CHEBI:57597"/>
    </ligand>
</feature>
<feature type="binding site" evidence="1">
    <location>
        <position position="243"/>
    </location>
    <ligand>
        <name>glycerol</name>
        <dbReference type="ChEBI" id="CHEBI:17754"/>
    </ligand>
</feature>
<feature type="binding site" evidence="1">
    <location>
        <position position="243"/>
    </location>
    <ligand>
        <name>sn-glycerol 3-phosphate</name>
        <dbReference type="ChEBI" id="CHEBI:57597"/>
    </ligand>
</feature>
<feature type="binding site" evidence="1">
    <location>
        <position position="244"/>
    </location>
    <ligand>
        <name>glycerol</name>
        <dbReference type="ChEBI" id="CHEBI:17754"/>
    </ligand>
</feature>
<feature type="binding site" evidence="1">
    <location>
        <position position="265"/>
    </location>
    <ligand>
        <name>ADP</name>
        <dbReference type="ChEBI" id="CHEBI:456216"/>
    </ligand>
</feature>
<feature type="binding site" evidence="1">
    <location>
        <position position="265"/>
    </location>
    <ligand>
        <name>ATP</name>
        <dbReference type="ChEBI" id="CHEBI:30616"/>
    </ligand>
</feature>
<feature type="binding site" evidence="1">
    <location>
        <position position="308"/>
    </location>
    <ligand>
        <name>ADP</name>
        <dbReference type="ChEBI" id="CHEBI:456216"/>
    </ligand>
</feature>
<feature type="binding site" evidence="1">
    <location>
        <position position="308"/>
    </location>
    <ligand>
        <name>ATP</name>
        <dbReference type="ChEBI" id="CHEBI:30616"/>
    </ligand>
</feature>
<feature type="binding site" evidence="1">
    <location>
        <position position="312"/>
    </location>
    <ligand>
        <name>ATP</name>
        <dbReference type="ChEBI" id="CHEBI:30616"/>
    </ligand>
</feature>
<feature type="binding site" evidence="1">
    <location>
        <position position="409"/>
    </location>
    <ligand>
        <name>ADP</name>
        <dbReference type="ChEBI" id="CHEBI:456216"/>
    </ligand>
</feature>
<feature type="binding site" evidence="1">
    <location>
        <position position="409"/>
    </location>
    <ligand>
        <name>ATP</name>
        <dbReference type="ChEBI" id="CHEBI:30616"/>
    </ligand>
</feature>
<feature type="binding site" evidence="1">
    <location>
        <position position="413"/>
    </location>
    <ligand>
        <name>ADP</name>
        <dbReference type="ChEBI" id="CHEBI:456216"/>
    </ligand>
</feature>
<accession>Q316D5</accession>
<dbReference type="EC" id="2.7.1.30" evidence="1"/>
<dbReference type="EMBL" id="CP000112">
    <property type="protein sequence ID" value="ABB37211.1"/>
    <property type="molecule type" value="Genomic_DNA"/>
</dbReference>
<dbReference type="RefSeq" id="WP_011366544.1">
    <property type="nucleotide sequence ID" value="NC_007519.1"/>
</dbReference>
<dbReference type="SMR" id="Q316D5"/>
<dbReference type="STRING" id="207559.Dde_0410"/>
<dbReference type="KEGG" id="dde:Dde_0410"/>
<dbReference type="eggNOG" id="COG0554">
    <property type="taxonomic scope" value="Bacteria"/>
</dbReference>
<dbReference type="HOGENOM" id="CLU_009281_2_3_7"/>
<dbReference type="UniPathway" id="UPA00618">
    <property type="reaction ID" value="UER00672"/>
</dbReference>
<dbReference type="Proteomes" id="UP000002710">
    <property type="component" value="Chromosome"/>
</dbReference>
<dbReference type="GO" id="GO:0005829">
    <property type="term" value="C:cytosol"/>
    <property type="evidence" value="ECO:0007669"/>
    <property type="project" value="TreeGrafter"/>
</dbReference>
<dbReference type="GO" id="GO:0005524">
    <property type="term" value="F:ATP binding"/>
    <property type="evidence" value="ECO:0007669"/>
    <property type="project" value="UniProtKB-UniRule"/>
</dbReference>
<dbReference type="GO" id="GO:0004370">
    <property type="term" value="F:glycerol kinase activity"/>
    <property type="evidence" value="ECO:0000250"/>
    <property type="project" value="UniProtKB"/>
</dbReference>
<dbReference type="GO" id="GO:0019563">
    <property type="term" value="P:glycerol catabolic process"/>
    <property type="evidence" value="ECO:0007669"/>
    <property type="project" value="UniProtKB-UniRule"/>
</dbReference>
<dbReference type="GO" id="GO:0006071">
    <property type="term" value="P:glycerol metabolic process"/>
    <property type="evidence" value="ECO:0000250"/>
    <property type="project" value="UniProtKB"/>
</dbReference>
<dbReference type="GO" id="GO:0006072">
    <property type="term" value="P:glycerol-3-phosphate metabolic process"/>
    <property type="evidence" value="ECO:0007669"/>
    <property type="project" value="InterPro"/>
</dbReference>
<dbReference type="CDD" id="cd07786">
    <property type="entry name" value="FGGY_EcGK_like"/>
    <property type="match status" value="1"/>
</dbReference>
<dbReference type="FunFam" id="3.30.420.40:FF:000007">
    <property type="entry name" value="Glycerol kinase"/>
    <property type="match status" value="1"/>
</dbReference>
<dbReference type="FunFam" id="3.30.420.40:FF:000008">
    <property type="entry name" value="Glycerol kinase"/>
    <property type="match status" value="1"/>
</dbReference>
<dbReference type="Gene3D" id="3.30.420.40">
    <property type="match status" value="2"/>
</dbReference>
<dbReference type="HAMAP" id="MF_00186">
    <property type="entry name" value="Glycerol_kin"/>
    <property type="match status" value="1"/>
</dbReference>
<dbReference type="InterPro" id="IPR043129">
    <property type="entry name" value="ATPase_NBD"/>
</dbReference>
<dbReference type="InterPro" id="IPR000577">
    <property type="entry name" value="Carb_kinase_FGGY"/>
</dbReference>
<dbReference type="InterPro" id="IPR018483">
    <property type="entry name" value="Carb_kinase_FGGY_CS"/>
</dbReference>
<dbReference type="InterPro" id="IPR018485">
    <property type="entry name" value="FGGY_C"/>
</dbReference>
<dbReference type="InterPro" id="IPR018484">
    <property type="entry name" value="FGGY_N"/>
</dbReference>
<dbReference type="InterPro" id="IPR005999">
    <property type="entry name" value="Glycerol_kin"/>
</dbReference>
<dbReference type="NCBIfam" id="TIGR01311">
    <property type="entry name" value="glycerol_kin"/>
    <property type="match status" value="1"/>
</dbReference>
<dbReference type="NCBIfam" id="NF000756">
    <property type="entry name" value="PRK00047.1"/>
    <property type="match status" value="1"/>
</dbReference>
<dbReference type="PANTHER" id="PTHR10196:SF69">
    <property type="entry name" value="GLYCEROL KINASE"/>
    <property type="match status" value="1"/>
</dbReference>
<dbReference type="PANTHER" id="PTHR10196">
    <property type="entry name" value="SUGAR KINASE"/>
    <property type="match status" value="1"/>
</dbReference>
<dbReference type="Pfam" id="PF02782">
    <property type="entry name" value="FGGY_C"/>
    <property type="match status" value="1"/>
</dbReference>
<dbReference type="Pfam" id="PF00370">
    <property type="entry name" value="FGGY_N"/>
    <property type="match status" value="1"/>
</dbReference>
<dbReference type="PIRSF" id="PIRSF000538">
    <property type="entry name" value="GlpK"/>
    <property type="match status" value="1"/>
</dbReference>
<dbReference type="SUPFAM" id="SSF53067">
    <property type="entry name" value="Actin-like ATPase domain"/>
    <property type="match status" value="2"/>
</dbReference>
<dbReference type="PROSITE" id="PS00933">
    <property type="entry name" value="FGGY_KINASES_1"/>
    <property type="match status" value="1"/>
</dbReference>
<dbReference type="PROSITE" id="PS00445">
    <property type="entry name" value="FGGY_KINASES_2"/>
    <property type="match status" value="1"/>
</dbReference>
<organism>
    <name type="scientific">Oleidesulfovibrio alaskensis (strain ATCC BAA-1058 / DSM 17464 / G20)</name>
    <name type="common">Desulfovibrio alaskensis</name>
    <dbReference type="NCBI Taxonomy" id="207559"/>
    <lineage>
        <taxon>Bacteria</taxon>
        <taxon>Pseudomonadati</taxon>
        <taxon>Thermodesulfobacteriota</taxon>
        <taxon>Desulfovibrionia</taxon>
        <taxon>Desulfovibrionales</taxon>
        <taxon>Desulfovibrionaceae</taxon>
        <taxon>Oleidesulfovibrio</taxon>
    </lineage>
</organism>
<reference key="1">
    <citation type="journal article" date="2011" name="J. Bacteriol.">
        <title>Complete genome sequence and updated annotation of Desulfovibrio alaskensis G20.</title>
        <authorList>
            <person name="Hauser L.J."/>
            <person name="Land M.L."/>
            <person name="Brown S.D."/>
            <person name="Larimer F."/>
            <person name="Keller K.L."/>
            <person name="Rapp-Giles B.J."/>
            <person name="Price M.N."/>
            <person name="Lin M."/>
            <person name="Bruce D.C."/>
            <person name="Detter J.C."/>
            <person name="Tapia R."/>
            <person name="Han C.S."/>
            <person name="Goodwin L.A."/>
            <person name="Cheng J.F."/>
            <person name="Pitluck S."/>
            <person name="Copeland A."/>
            <person name="Lucas S."/>
            <person name="Nolan M."/>
            <person name="Lapidus A.L."/>
            <person name="Palumbo A.V."/>
            <person name="Wall J.D."/>
        </authorList>
    </citation>
    <scope>NUCLEOTIDE SEQUENCE [LARGE SCALE GENOMIC DNA]</scope>
    <source>
        <strain>ATCC BAA-1058 / DSM 17464 / G20</strain>
    </source>
</reference>
<comment type="function">
    <text evidence="1">Key enzyme in the regulation of glycerol uptake and metabolism. Catalyzes the phosphorylation of glycerol to yield sn-glycerol 3-phosphate.</text>
</comment>
<comment type="catalytic activity">
    <reaction evidence="1">
        <text>glycerol + ATP = sn-glycerol 3-phosphate + ADP + H(+)</text>
        <dbReference type="Rhea" id="RHEA:21644"/>
        <dbReference type="ChEBI" id="CHEBI:15378"/>
        <dbReference type="ChEBI" id="CHEBI:17754"/>
        <dbReference type="ChEBI" id="CHEBI:30616"/>
        <dbReference type="ChEBI" id="CHEBI:57597"/>
        <dbReference type="ChEBI" id="CHEBI:456216"/>
        <dbReference type="EC" id="2.7.1.30"/>
    </reaction>
</comment>
<comment type="activity regulation">
    <text evidence="1">Inhibited by fructose 1,6-bisphosphate (FBP).</text>
</comment>
<comment type="pathway">
    <text evidence="1">Polyol metabolism; glycerol degradation via glycerol kinase pathway; sn-glycerol 3-phosphate from glycerol: step 1/1.</text>
</comment>
<comment type="similarity">
    <text evidence="1">Belongs to the FGGY kinase family.</text>
</comment>
<proteinExistence type="inferred from homology"/>
<sequence>MSKYILALDQGTTSSRAILFTREGDIKQIAQKEFTQIYPQPGWVEHNANEIFDTQSWVMTECLQRAGVNASEVAAIGITNQRETTVVWDRKSGAPVHNAIVWQDRRTASICDEMKKRGLAETIREKTGLVIDAYFSGTKVKWILDNVPGARAKAERGELCFGTIDTWVIWNLTKGKEHVTDESNASRTMLFNIHTGDWDEELLKILDVPRSMLPRVAGSSEVVAETHPEFLGKAVPVSGIAGDQQAATFGNACLTEGMAKNTYGTGCFMLLNTGKQAHISKNNLLTTTGWNTPSGRYYCLEGSVFIAGAVVQWLRDGLGIIQSAPEVEQLALSVPDNGGVVLVPAFAGLGAPHWDQYARGTMVGVTRGTTKAHIARAALESIALQTLDIMDCMQKDAGINLAALRADGGATRNNLLMQFQADVLGVPVERPKVTETTALGAAYLAGLAVGFWKSEDEITAMWQLDRRFEPNMSAEVREKLVYNWKRAVERSKEWAED</sequence>
<evidence type="ECO:0000255" key="1">
    <source>
        <dbReference type="HAMAP-Rule" id="MF_00186"/>
    </source>
</evidence>
<protein>
    <recommendedName>
        <fullName evidence="1">Glycerol kinase</fullName>
        <ecNumber evidence="1">2.7.1.30</ecNumber>
    </recommendedName>
    <alternativeName>
        <fullName evidence="1">ATP:glycerol 3-phosphotransferase</fullName>
    </alternativeName>
    <alternativeName>
        <fullName evidence="1">Glycerokinase</fullName>
        <shortName evidence="1">GK</shortName>
    </alternativeName>
</protein>
<gene>
    <name evidence="1" type="primary">glpK</name>
    <name type="ordered locus">Dde_0410</name>
</gene>
<name>GLPK_OLEA2</name>